<keyword id="KW-0067">ATP-binding</keyword>
<keyword id="KW-1035">Host cytoplasm</keyword>
<keyword id="KW-0945">Host-virus interaction</keyword>
<keyword id="KW-0378">Hydrolase</keyword>
<keyword id="KW-0460">Magnesium</keyword>
<keyword id="KW-0479">Metal-binding</keyword>
<keyword id="KW-0547">Nucleotide-binding</keyword>
<keyword id="KW-0694">RNA-binding</keyword>
<feature type="chain" id="PRO_0000369536" description="Non-structural protein 2">
    <location>
        <begin position="1"/>
        <end position="317"/>
    </location>
</feature>
<feature type="region of interest" description="RNA-binding" evidence="1">
    <location>
        <begin position="205"/>
        <end position="241"/>
    </location>
</feature>
<feature type="active site" description="For NTPase and RTPase activities" evidence="1">
    <location>
        <position position="225"/>
    </location>
</feature>
<feature type="binding site" evidence="1">
    <location>
        <begin position="107"/>
        <end position="109"/>
    </location>
    <ligand>
        <name>ATP</name>
        <dbReference type="ChEBI" id="CHEBI:30616"/>
    </ligand>
</feature>
<feature type="binding site" evidence="1">
    <location>
        <position position="188"/>
    </location>
    <ligand>
        <name>ATP</name>
        <dbReference type="ChEBI" id="CHEBI:30616"/>
    </ligand>
</feature>
<feature type="binding site" evidence="1">
    <location>
        <begin position="221"/>
        <end position="223"/>
    </location>
    <ligand>
        <name>ATP</name>
        <dbReference type="ChEBI" id="CHEBI:30616"/>
    </ligand>
</feature>
<feature type="binding site" evidence="1">
    <location>
        <position position="227"/>
    </location>
    <ligand>
        <name>ATP</name>
        <dbReference type="ChEBI" id="CHEBI:30616"/>
    </ligand>
</feature>
<protein>
    <recommendedName>
        <fullName evidence="1">Non-structural protein 2</fullName>
        <shortName evidence="1">NSP2</shortName>
        <ecNumber evidence="1">3.6.4.-</ecNumber>
    </recommendedName>
    <alternativeName>
        <fullName evidence="1">NCVP3</fullName>
    </alternativeName>
    <alternativeName>
        <fullName evidence="1">Non-structural RNA-binding protein 35</fullName>
        <shortName evidence="1">NS35</shortName>
    </alternativeName>
</protein>
<dbReference type="EC" id="3.6.4.-" evidence="1"/>
<dbReference type="EMBL" id="AB022770">
    <property type="protein sequence ID" value="BAA84967.1"/>
    <property type="molecule type" value="mRNA"/>
</dbReference>
<dbReference type="SMR" id="Q9QNA8"/>
<dbReference type="Proteomes" id="UP000001458">
    <property type="component" value="Genome"/>
</dbReference>
<dbReference type="GO" id="GO:0030430">
    <property type="term" value="C:host cell cytoplasm"/>
    <property type="evidence" value="ECO:0007669"/>
    <property type="project" value="UniProtKB-SubCell"/>
</dbReference>
<dbReference type="GO" id="GO:0005524">
    <property type="term" value="F:ATP binding"/>
    <property type="evidence" value="ECO:0007669"/>
    <property type="project" value="UniProtKB-KW"/>
</dbReference>
<dbReference type="GO" id="GO:0046872">
    <property type="term" value="F:metal ion binding"/>
    <property type="evidence" value="ECO:0007669"/>
    <property type="project" value="UniProtKB-UniRule"/>
</dbReference>
<dbReference type="GO" id="GO:0004550">
    <property type="term" value="F:nucleoside diphosphate kinase activity"/>
    <property type="evidence" value="ECO:0007669"/>
    <property type="project" value="InterPro"/>
</dbReference>
<dbReference type="GO" id="GO:0017111">
    <property type="term" value="F:ribonucleoside triphosphate phosphatase activity"/>
    <property type="evidence" value="ECO:0007669"/>
    <property type="project" value="InterPro"/>
</dbReference>
<dbReference type="GO" id="GO:0003723">
    <property type="term" value="F:RNA binding"/>
    <property type="evidence" value="ECO:0007669"/>
    <property type="project" value="UniProtKB-UniRule"/>
</dbReference>
<dbReference type="GO" id="GO:0019079">
    <property type="term" value="P:viral genome replication"/>
    <property type="evidence" value="ECO:0007669"/>
    <property type="project" value="UniProtKB-UniRule"/>
</dbReference>
<dbReference type="Gene3D" id="3.30.428.20">
    <property type="entry name" value="Rotavirus NSP2 fragment, C-terminal domain"/>
    <property type="match status" value="1"/>
</dbReference>
<dbReference type="Gene3D" id="3.90.1400.10">
    <property type="entry name" value="Rotavirus NSP2 fragment, N-terminal domain"/>
    <property type="match status" value="1"/>
</dbReference>
<dbReference type="HAMAP" id="MF_04089">
    <property type="entry name" value="ROTA_NSP2"/>
    <property type="match status" value="1"/>
</dbReference>
<dbReference type="InterPro" id="IPR048306">
    <property type="entry name" value="Rota_NS35_C"/>
</dbReference>
<dbReference type="InterPro" id="IPR048573">
    <property type="entry name" value="Rota_NS35_N"/>
</dbReference>
<dbReference type="InterPro" id="IPR003668">
    <property type="entry name" value="Rotavirus_NSP2"/>
</dbReference>
<dbReference type="InterPro" id="IPR024076">
    <property type="entry name" value="Rotavirus_NSP2_C"/>
</dbReference>
<dbReference type="InterPro" id="IPR024068">
    <property type="entry name" value="Rotavirus_NSP2_N"/>
</dbReference>
<dbReference type="Pfam" id="PF02509">
    <property type="entry name" value="Rota_NS35_C"/>
    <property type="match status" value="1"/>
</dbReference>
<dbReference type="Pfam" id="PF21067">
    <property type="entry name" value="Rota_NS35_N"/>
    <property type="match status" value="1"/>
</dbReference>
<dbReference type="SUPFAM" id="SSF75347">
    <property type="entry name" value="Rotavirus NSP2 fragment, C-terminal domain"/>
    <property type="match status" value="1"/>
</dbReference>
<dbReference type="SUPFAM" id="SSF75574">
    <property type="entry name" value="Rotavirus NSP2 fragment, N-terminal domain"/>
    <property type="match status" value="1"/>
</dbReference>
<organism>
    <name type="scientific">Rotavirus A (strain RVA/Human/Japan/KU/1995/G1P1A[8])</name>
    <name type="common">RV-A</name>
    <dbReference type="NCBI Taxonomy" id="10952"/>
    <lineage>
        <taxon>Viruses</taxon>
        <taxon>Riboviria</taxon>
        <taxon>Orthornavirae</taxon>
        <taxon>Duplornaviricota</taxon>
        <taxon>Resentoviricetes</taxon>
        <taxon>Reovirales</taxon>
        <taxon>Sedoreoviridae</taxon>
        <taxon>Rotavirus</taxon>
        <taxon>Rotavirus A</taxon>
    </lineage>
</organism>
<proteinExistence type="evidence at protein level"/>
<evidence type="ECO:0000255" key="1">
    <source>
        <dbReference type="HAMAP-Rule" id="MF_04089"/>
    </source>
</evidence>
<evidence type="ECO:0000269" key="2">
    <source>
    </source>
</evidence>
<comment type="function">
    <text evidence="1 2">Participates in replication and packaging of the viral genome. Plays a crucial role, together with NSP5, in the formation of virus factories (viroplasms), which are large inclusions in the host cytoplasm where replication intermediates are assembled and viral RNA replication takes place. Displays ssRNA binding, NTPase, RNA triphosphatase (RTPase) and ATP-independent helix-unwinding activities. The unwinding activity may prepare and organize plus-strand RNAs for packaging and replication by removing interfering secondary structures. The RTPase activity plays a role in the removal of the gamma-phosphate from the rotavirus RNA minus strands of dsRNA genome segments (By similarity). Participates in the selective exclusion of host proteins from stress granules (SG) and P bodies (PB) (PubMed:30258011). Also participates in the sequestration of these remodeled organelles in viral factories (PubMed:30258011).</text>
</comment>
<comment type="cofactor">
    <cofactor evidence="1">
        <name>Mg(2+)</name>
        <dbReference type="ChEBI" id="CHEBI:18420"/>
    </cofactor>
</comment>
<comment type="subunit">
    <text evidence="1 2">Homooctamer. Interacts with VP1; this interaction is weak. Interacts with NSP5; this interaction leads to up-regulation of NSP5 phosphorylation and formation of viral factories. Interacts with host DCP1A, DCP1B, DDX6, EDC4 and EIF2S1/eIF2-alpha; these interactions are probably part of the sequestration of some host SGs and PBs proteins in viral factories.</text>
</comment>
<comment type="subcellular location">
    <subcellularLocation>
        <location evidence="1">Host cytoplasm</location>
    </subcellularLocation>
    <text evidence="1">Found in spherical cytoplasmic structures, called viral factories, that appear early after infection and are the site of viral replication and packaging.</text>
</comment>
<comment type="similarity">
    <text evidence="1">Belongs to the rotavirus NSP2 family.</text>
</comment>
<accession>Q9QNA8</accession>
<name>NSP2_ROTHK</name>
<sequence>MAELACFCYPHLENDSYKFIPFNNLAIKCMLTAKVDKKDQDKFYNSIIYGIAPPPQFKKRYNTNDNSRGMNYETPMLIKVAILICEALNSIKVTQSDVANVLSRVVSVRHLENLVLRKENHQDVLFHSKELLLKSVLIAIGQSKEIETTATAEGGEIVFQNVAFTMWKLTYLDHKLMPILDQNFIEYKITMNEDKPISDVHVKELIAELRWQYNRFAVITHGKGHYRVVKYSSVANHADRVFATYKNNAKSGNVIDFNLLDQRIIWQNWYAFTSSMKQGFTLDVCKKLLFQKMKQERNPFKGLSTDRKMDEVSRIGI</sequence>
<reference key="1">
    <citation type="submission" date="1999-01" db="EMBL/GenBank/DDBJ databases">
        <title>Rotavirus.</title>
        <authorList>
            <person name="Taniguchi K."/>
        </authorList>
    </citation>
    <scope>NUCLEOTIDE SEQUENCE [MRNA]</scope>
</reference>
<reference key="2">
    <citation type="journal article" date="2018" name="J. Virol.">
        <title>Rotavirus Induces Formation of Remodeled Stress Granules and P Bodies and Their Sequestration in Viroplasms To Promote Progeny Virus Production.</title>
        <authorList>
            <person name="Dhillon P."/>
            <person name="Rao C.D."/>
        </authorList>
    </citation>
    <scope>FUNCTION</scope>
    <scope>INTERACTION WITH HOST DCP1A</scope>
    <scope>INTERACTION WITH HOST DCP1B</scope>
    <scope>INTERACTION WITH HOST DDX6</scope>
    <scope>INTERACTION WITH HOST EDC4</scope>
    <scope>INTERACTION WITH HOST EIF2S1</scope>
</reference>
<organismHost>
    <name type="scientific">Homo sapiens</name>
    <name type="common">Human</name>
    <dbReference type="NCBI Taxonomy" id="9606"/>
</organismHost>